<evidence type="ECO:0000250" key="1">
    <source>
        <dbReference type="UniProtKB" id="A0A0D4WTV1"/>
    </source>
</evidence>
<evidence type="ECO:0000250" key="2">
    <source>
        <dbReference type="UniProtKB" id="A0A0D4WV12"/>
    </source>
</evidence>
<evidence type="ECO:0000250" key="3">
    <source>
        <dbReference type="UniProtKB" id="P0CE80"/>
    </source>
</evidence>
<evidence type="ECO:0000250" key="4">
    <source>
        <dbReference type="UniProtKB" id="Q4ZFU2"/>
    </source>
</evidence>
<evidence type="ECO:0000250" key="5">
    <source>
        <dbReference type="UniProtKB" id="Q8I914"/>
    </source>
</evidence>
<evidence type="ECO:0000303" key="6">
    <source>
    </source>
</evidence>
<evidence type="ECO:0000305" key="7"/>
<evidence type="ECO:0000305" key="8">
    <source>
    </source>
</evidence>
<feature type="chain" id="PRO_0000392829" description="Dermonecrotic toxin LamSicTox-alphaIV1i">
    <location>
        <begin position="1" status="less than"/>
        <end position="275"/>
    </location>
</feature>
<feature type="active site" evidence="5">
    <location>
        <position position="5"/>
    </location>
</feature>
<feature type="active site" description="Nucleophile" evidence="5">
    <location>
        <position position="41"/>
    </location>
</feature>
<feature type="binding site" evidence="5">
    <location>
        <position position="25"/>
    </location>
    <ligand>
        <name>Mg(2+)</name>
        <dbReference type="ChEBI" id="CHEBI:18420"/>
    </ligand>
</feature>
<feature type="binding site" evidence="5">
    <location>
        <position position="27"/>
    </location>
    <ligand>
        <name>Mg(2+)</name>
        <dbReference type="ChEBI" id="CHEBI:18420"/>
    </ligand>
</feature>
<feature type="binding site" evidence="5">
    <location>
        <position position="85"/>
    </location>
    <ligand>
        <name>Mg(2+)</name>
        <dbReference type="ChEBI" id="CHEBI:18420"/>
    </ligand>
</feature>
<feature type="disulfide bond" evidence="3">
    <location>
        <begin position="45"/>
        <end position="51"/>
    </location>
</feature>
<feature type="disulfide bond" evidence="3">
    <location>
        <begin position="47"/>
        <end position="192"/>
    </location>
</feature>
<feature type="non-terminal residue">
    <location>
        <position position="1"/>
    </location>
</feature>
<protein>
    <recommendedName>
        <fullName evidence="6">Dermonecrotic toxin LamSicTox-alphaIV1i</fullName>
        <ecNumber evidence="4">4.6.1.-</ecNumber>
    </recommendedName>
    <alternativeName>
        <fullName>Phospholipase D</fullName>
        <shortName>PLD</shortName>
    </alternativeName>
    <alternativeName>
        <fullName>Sphingomyelin phosphodiesterase D</fullName>
        <shortName>SMD</shortName>
        <shortName>SMase D</shortName>
        <shortName>Sphingomyelinase D</shortName>
    </alternativeName>
</protein>
<proteinExistence type="evidence at transcript level"/>
<organism>
    <name type="scientific">Loxosceles amazonica</name>
    <name type="common">Recluse spider</name>
    <dbReference type="NCBI Taxonomy" id="571517"/>
    <lineage>
        <taxon>Eukaryota</taxon>
        <taxon>Metazoa</taxon>
        <taxon>Ecdysozoa</taxon>
        <taxon>Arthropoda</taxon>
        <taxon>Chelicerata</taxon>
        <taxon>Arachnida</taxon>
        <taxon>Araneae</taxon>
        <taxon>Araneomorphae</taxon>
        <taxon>Haplogynae</taxon>
        <taxon>Scytodoidea</taxon>
        <taxon>Sicariidae</taxon>
        <taxon>Loxosceles</taxon>
    </lineage>
</organism>
<sequence length="275" mass="31522">WIMGHMVNEIYQIDEFVDLGANSIETDITFDDDAMAEYSYHGVPCDCMRWCHKWEYVNDFLEGLRRATTPGDSKYRKQLILVVFDLKTGDLSSSTAYKGGKLFAEKLLRYYWNGGSNGGRAYIIISIPDIDHYAFISGFRDALKKSGHEDLLAKVGYDFSGNDDLNSIRSALHKAGVKDREHVWQSGGITNCLLRSLDRVNEAVKNRDSSNGYISKMYYWTIEKYATGRDALNAEVDGIMTNYPDVIVNVLNEDSFKNRFRMATFDDNPWELFKR</sequence>
<accession>C0JB18</accession>
<reference key="1">
    <citation type="journal article" date="2009" name="Mol. Biol. Evol.">
        <title>Molecular evolution, functional variation, and proposed nomenclature of the gene family that includes sphingomyelinase D in sicariid spider venoms.</title>
        <authorList>
            <person name="Binford G.J."/>
            <person name="Bodner M.R."/>
            <person name="Cordes M.H."/>
            <person name="Baldwin K.L."/>
            <person name="Rynerson M.R."/>
            <person name="Burns S.N."/>
            <person name="Zobel-Thropp P.A."/>
        </authorList>
    </citation>
    <scope>NUCLEOTIDE SEQUENCE [MRNA]</scope>
    <scope>NOMENCLATURE</scope>
    <source>
        <tissue>Venom gland</tissue>
    </source>
</reference>
<name>A411_LOXAM</name>
<comment type="function">
    <text evidence="1 3">Dermonecrotic toxins cleave the phosphodiester linkage between the phosphate and headgroup of certain phospholipids (sphingolipid and lysolipid substrates), forming an alcohol (often choline) and a cyclic phosphate (By similarity). This toxin acts on sphingomyelin (SM) (By similarity). It may also act on ceramide phosphoethanolamine (CPE), lysophosphatidylcholine (LPC) and lysophosphatidylethanolamine (LPE), but not on lysophosphatidylserine (LPS), and lysophosphatidylglycerol (LPG) (By similarity). It acts by transphosphatidylation, releasing exclusively cyclic phosphate products as second products (By similarity). Induces dermonecrosis, hemolysis, increased vascular permeability, edema, inflammatory response, and platelet aggregation (By similarity).</text>
</comment>
<comment type="catalytic activity">
    <reaction evidence="1">
        <text>an N-(acyl)-sphingosylphosphocholine = an N-(acyl)-sphingosyl-1,3-cyclic phosphate + choline</text>
        <dbReference type="Rhea" id="RHEA:60652"/>
        <dbReference type="ChEBI" id="CHEBI:15354"/>
        <dbReference type="ChEBI" id="CHEBI:64583"/>
        <dbReference type="ChEBI" id="CHEBI:143892"/>
    </reaction>
</comment>
<comment type="catalytic activity">
    <reaction evidence="1">
        <text>an N-(acyl)-sphingosylphosphoethanolamine = an N-(acyl)-sphingosyl-1,3-cyclic phosphate + ethanolamine</text>
        <dbReference type="Rhea" id="RHEA:60648"/>
        <dbReference type="ChEBI" id="CHEBI:57603"/>
        <dbReference type="ChEBI" id="CHEBI:143891"/>
        <dbReference type="ChEBI" id="CHEBI:143892"/>
    </reaction>
</comment>
<comment type="catalytic activity">
    <reaction evidence="1">
        <text>a 1-acyl-sn-glycero-3-phosphocholine = a 1-acyl-sn-glycero-2,3-cyclic phosphate + choline</text>
        <dbReference type="Rhea" id="RHEA:60700"/>
        <dbReference type="ChEBI" id="CHEBI:15354"/>
        <dbReference type="ChEBI" id="CHEBI:58168"/>
        <dbReference type="ChEBI" id="CHEBI:143947"/>
    </reaction>
</comment>
<comment type="catalytic activity">
    <reaction evidence="1">
        <text>a 1-acyl-sn-glycero-3-phosphoethanolamine = a 1-acyl-sn-glycero-2,3-cyclic phosphate + ethanolamine</text>
        <dbReference type="Rhea" id="RHEA:60704"/>
        <dbReference type="ChEBI" id="CHEBI:57603"/>
        <dbReference type="ChEBI" id="CHEBI:64381"/>
        <dbReference type="ChEBI" id="CHEBI:143947"/>
    </reaction>
</comment>
<comment type="cofactor">
    <cofactor evidence="5">
        <name>Mg(2+)</name>
        <dbReference type="ChEBI" id="CHEBI:18420"/>
    </cofactor>
    <text evidence="5">Binds 1 Mg(2+) ion per subunit.</text>
</comment>
<comment type="subcellular location">
    <subcellularLocation>
        <location evidence="8">Secreted</location>
    </subcellularLocation>
</comment>
<comment type="tissue specificity">
    <text evidence="8">Expressed by the venom gland.</text>
</comment>
<comment type="similarity">
    <text evidence="7">Belongs to the arthropod phospholipase D family. Class II subfamily.</text>
</comment>
<comment type="caution">
    <text evidence="1 2 4">The most common activity assay for dermonecrotic toxins detects enzymatic activity by monitoring choline release from substrate. Liberation of choline from sphingomyelin (SM) or lysophosphatidylcholine (LPC) is commonly assumed to result from substrate hydrolysis, giving either ceramide-1-phosphate (C1P) or lysophosphatidic acid (LPA), respectively, as a second product. However, two studies from Lajoie and colleagues (2013 and 2015) report the observation of exclusive formation of cyclic phosphate products as second products, resulting from intramolecular transphosphatidylation. Cyclic phosphates have vastly different biological properties from their monoester counterparts, and they may be relevant to the pathology of brown spider envenomation.</text>
</comment>
<dbReference type="EC" id="4.6.1.-" evidence="4"/>
<dbReference type="EMBL" id="FJ171453">
    <property type="protein sequence ID" value="ACN48949.1"/>
    <property type="molecule type" value="mRNA"/>
</dbReference>
<dbReference type="SMR" id="C0JB18"/>
<dbReference type="GO" id="GO:0005576">
    <property type="term" value="C:extracellular region"/>
    <property type="evidence" value="ECO:0007669"/>
    <property type="project" value="UniProtKB-SubCell"/>
</dbReference>
<dbReference type="GO" id="GO:0016829">
    <property type="term" value="F:lyase activity"/>
    <property type="evidence" value="ECO:0007669"/>
    <property type="project" value="UniProtKB-KW"/>
</dbReference>
<dbReference type="GO" id="GO:0046872">
    <property type="term" value="F:metal ion binding"/>
    <property type="evidence" value="ECO:0007669"/>
    <property type="project" value="UniProtKB-KW"/>
</dbReference>
<dbReference type="GO" id="GO:0008081">
    <property type="term" value="F:phosphoric diester hydrolase activity"/>
    <property type="evidence" value="ECO:0007669"/>
    <property type="project" value="InterPro"/>
</dbReference>
<dbReference type="GO" id="GO:0090729">
    <property type="term" value="F:toxin activity"/>
    <property type="evidence" value="ECO:0007669"/>
    <property type="project" value="UniProtKB-KW"/>
</dbReference>
<dbReference type="GO" id="GO:0031640">
    <property type="term" value="P:killing of cells of another organism"/>
    <property type="evidence" value="ECO:0007669"/>
    <property type="project" value="UniProtKB-KW"/>
</dbReference>
<dbReference type="GO" id="GO:0016042">
    <property type="term" value="P:lipid catabolic process"/>
    <property type="evidence" value="ECO:0007669"/>
    <property type="project" value="UniProtKB-KW"/>
</dbReference>
<dbReference type="CDD" id="cd08576">
    <property type="entry name" value="GDPD_like_SMaseD_PLD"/>
    <property type="match status" value="1"/>
</dbReference>
<dbReference type="Gene3D" id="3.20.20.190">
    <property type="entry name" value="Phosphatidylinositol (PI) phosphodiesterase"/>
    <property type="match status" value="1"/>
</dbReference>
<dbReference type="InterPro" id="IPR017946">
    <property type="entry name" value="PLC-like_Pdiesterase_TIM-brl"/>
</dbReference>
<dbReference type="SUPFAM" id="SSF51695">
    <property type="entry name" value="PLC-like phosphodiesterases"/>
    <property type="match status" value="1"/>
</dbReference>
<keyword id="KW-0204">Cytolysis</keyword>
<keyword id="KW-1061">Dermonecrotic toxin</keyword>
<keyword id="KW-1015">Disulfide bond</keyword>
<keyword id="KW-0354">Hemolysis</keyword>
<keyword id="KW-0442">Lipid degradation</keyword>
<keyword id="KW-0443">Lipid metabolism</keyword>
<keyword id="KW-0456">Lyase</keyword>
<keyword id="KW-0460">Magnesium</keyword>
<keyword id="KW-0479">Metal-binding</keyword>
<keyword id="KW-0964">Secreted</keyword>
<keyword id="KW-0800">Toxin</keyword>